<protein>
    <recommendedName>
        <fullName evidence="1">Malate dehydrogenase</fullName>
        <ecNumber evidence="1">1.1.1.37</ecNumber>
    </recommendedName>
</protein>
<accession>C6DKH1</accession>
<proteinExistence type="inferred from homology"/>
<feature type="chain" id="PRO_1000215354" description="Malate dehydrogenase">
    <location>
        <begin position="1"/>
        <end position="312"/>
    </location>
</feature>
<feature type="active site" description="Proton acceptor" evidence="1">
    <location>
        <position position="177"/>
    </location>
</feature>
<feature type="binding site" evidence="1">
    <location>
        <begin position="7"/>
        <end position="13"/>
    </location>
    <ligand>
        <name>NAD(+)</name>
        <dbReference type="ChEBI" id="CHEBI:57540"/>
    </ligand>
</feature>
<feature type="binding site" evidence="1">
    <location>
        <position position="34"/>
    </location>
    <ligand>
        <name>NAD(+)</name>
        <dbReference type="ChEBI" id="CHEBI:57540"/>
    </ligand>
</feature>
<feature type="binding site" evidence="1">
    <location>
        <position position="81"/>
    </location>
    <ligand>
        <name>substrate</name>
    </ligand>
</feature>
<feature type="binding site" evidence="1">
    <location>
        <position position="87"/>
    </location>
    <ligand>
        <name>substrate</name>
    </ligand>
</feature>
<feature type="binding site" evidence="1">
    <location>
        <position position="94"/>
    </location>
    <ligand>
        <name>NAD(+)</name>
        <dbReference type="ChEBI" id="CHEBI:57540"/>
    </ligand>
</feature>
<feature type="binding site" evidence="1">
    <location>
        <begin position="117"/>
        <end position="119"/>
    </location>
    <ligand>
        <name>NAD(+)</name>
        <dbReference type="ChEBI" id="CHEBI:57540"/>
    </ligand>
</feature>
<feature type="binding site" evidence="1">
    <location>
        <position position="119"/>
    </location>
    <ligand>
        <name>substrate</name>
    </ligand>
</feature>
<feature type="binding site" evidence="1">
    <location>
        <position position="153"/>
    </location>
    <ligand>
        <name>substrate</name>
    </ligand>
</feature>
<feature type="binding site" evidence="1">
    <location>
        <position position="227"/>
    </location>
    <ligand>
        <name>NAD(+)</name>
        <dbReference type="ChEBI" id="CHEBI:57540"/>
    </ligand>
</feature>
<comment type="function">
    <text evidence="1">Catalyzes the reversible oxidation of malate to oxaloacetate.</text>
</comment>
<comment type="catalytic activity">
    <reaction evidence="1">
        <text>(S)-malate + NAD(+) = oxaloacetate + NADH + H(+)</text>
        <dbReference type="Rhea" id="RHEA:21432"/>
        <dbReference type="ChEBI" id="CHEBI:15378"/>
        <dbReference type="ChEBI" id="CHEBI:15589"/>
        <dbReference type="ChEBI" id="CHEBI:16452"/>
        <dbReference type="ChEBI" id="CHEBI:57540"/>
        <dbReference type="ChEBI" id="CHEBI:57945"/>
        <dbReference type="EC" id="1.1.1.37"/>
    </reaction>
</comment>
<comment type="subunit">
    <text evidence="1">Homodimer.</text>
</comment>
<comment type="similarity">
    <text evidence="1">Belongs to the LDH/MDH superfamily. MDH type 1 family.</text>
</comment>
<sequence length="312" mass="32370">MKVAVLGAAGGIGQALALLLKTQLPSGSELSLYDIAPVTPGVAVDLSHIPTAVKIKGYSGEDAKPALAGADIVLISAGVARKPGMDRSDLFNVNAGIVRNLVEQIAVTCPKACIGIITNPVNTTVAIAAEVLKKAGVYDKNKLFGVTTLDIIRSNTFVAELKGKQPQDINVPVIGGHSGVTILPLLSQVPGISFSEQEVADLTKRIQNAGTEVVEAKAGGGSATLSMGQAAARFGLSLVRALQGESGVVECAYVESDGKHARFFAQPVLLGKDGVVERKDIGTLSAFEQNALSSMLDTLKQDIELGETFIKN</sequence>
<organism>
    <name type="scientific">Pectobacterium carotovorum subsp. carotovorum (strain PC1)</name>
    <dbReference type="NCBI Taxonomy" id="561230"/>
    <lineage>
        <taxon>Bacteria</taxon>
        <taxon>Pseudomonadati</taxon>
        <taxon>Pseudomonadota</taxon>
        <taxon>Gammaproteobacteria</taxon>
        <taxon>Enterobacterales</taxon>
        <taxon>Pectobacteriaceae</taxon>
        <taxon>Pectobacterium</taxon>
    </lineage>
</organism>
<dbReference type="EC" id="1.1.1.37" evidence="1"/>
<dbReference type="EMBL" id="CP001657">
    <property type="protein sequence ID" value="ACT11608.1"/>
    <property type="molecule type" value="Genomic_DNA"/>
</dbReference>
<dbReference type="RefSeq" id="WP_012773259.1">
    <property type="nucleotide sequence ID" value="NC_012917.1"/>
</dbReference>
<dbReference type="SMR" id="C6DKH1"/>
<dbReference type="STRING" id="561230.PC1_0553"/>
<dbReference type="GeneID" id="67795612"/>
<dbReference type="KEGG" id="pct:PC1_0553"/>
<dbReference type="eggNOG" id="COG0039">
    <property type="taxonomic scope" value="Bacteria"/>
</dbReference>
<dbReference type="HOGENOM" id="CLU_047181_1_0_6"/>
<dbReference type="OrthoDB" id="9802969at2"/>
<dbReference type="Proteomes" id="UP000002736">
    <property type="component" value="Chromosome"/>
</dbReference>
<dbReference type="GO" id="GO:0005737">
    <property type="term" value="C:cytoplasm"/>
    <property type="evidence" value="ECO:0007669"/>
    <property type="project" value="TreeGrafter"/>
</dbReference>
<dbReference type="GO" id="GO:0030060">
    <property type="term" value="F:L-malate dehydrogenase (NAD+) activity"/>
    <property type="evidence" value="ECO:0007669"/>
    <property type="project" value="UniProtKB-UniRule"/>
</dbReference>
<dbReference type="GO" id="GO:0006108">
    <property type="term" value="P:malate metabolic process"/>
    <property type="evidence" value="ECO:0007669"/>
    <property type="project" value="InterPro"/>
</dbReference>
<dbReference type="GO" id="GO:0006099">
    <property type="term" value="P:tricarboxylic acid cycle"/>
    <property type="evidence" value="ECO:0007669"/>
    <property type="project" value="UniProtKB-UniRule"/>
</dbReference>
<dbReference type="CDD" id="cd01337">
    <property type="entry name" value="MDH_glyoxysomal_mitochondrial"/>
    <property type="match status" value="1"/>
</dbReference>
<dbReference type="FunFam" id="3.40.50.720:FF:000017">
    <property type="entry name" value="Malate dehydrogenase"/>
    <property type="match status" value="1"/>
</dbReference>
<dbReference type="FunFam" id="3.90.110.10:FF:000001">
    <property type="entry name" value="Malate dehydrogenase"/>
    <property type="match status" value="1"/>
</dbReference>
<dbReference type="Gene3D" id="3.90.110.10">
    <property type="entry name" value="Lactate dehydrogenase/glycoside hydrolase, family 4, C-terminal"/>
    <property type="match status" value="1"/>
</dbReference>
<dbReference type="Gene3D" id="3.40.50.720">
    <property type="entry name" value="NAD(P)-binding Rossmann-like Domain"/>
    <property type="match status" value="1"/>
</dbReference>
<dbReference type="HAMAP" id="MF_01516">
    <property type="entry name" value="Malate_dehydrog_1"/>
    <property type="match status" value="1"/>
</dbReference>
<dbReference type="InterPro" id="IPR001557">
    <property type="entry name" value="L-lactate/malate_DH"/>
</dbReference>
<dbReference type="InterPro" id="IPR022383">
    <property type="entry name" value="Lactate/malate_DH_C"/>
</dbReference>
<dbReference type="InterPro" id="IPR001236">
    <property type="entry name" value="Lactate/malate_DH_N"/>
</dbReference>
<dbReference type="InterPro" id="IPR015955">
    <property type="entry name" value="Lactate_DH/Glyco_Ohase_4_C"/>
</dbReference>
<dbReference type="InterPro" id="IPR001252">
    <property type="entry name" value="Malate_DH_AS"/>
</dbReference>
<dbReference type="InterPro" id="IPR010097">
    <property type="entry name" value="Malate_DH_type1"/>
</dbReference>
<dbReference type="InterPro" id="IPR023958">
    <property type="entry name" value="Malate_DH_type1_bac"/>
</dbReference>
<dbReference type="InterPro" id="IPR036291">
    <property type="entry name" value="NAD(P)-bd_dom_sf"/>
</dbReference>
<dbReference type="NCBIfam" id="TIGR01772">
    <property type="entry name" value="MDH_euk_gproteo"/>
    <property type="match status" value="1"/>
</dbReference>
<dbReference type="PANTHER" id="PTHR11540">
    <property type="entry name" value="MALATE AND LACTATE DEHYDROGENASE"/>
    <property type="match status" value="1"/>
</dbReference>
<dbReference type="PANTHER" id="PTHR11540:SF16">
    <property type="entry name" value="MALATE DEHYDROGENASE, MITOCHONDRIAL"/>
    <property type="match status" value="1"/>
</dbReference>
<dbReference type="Pfam" id="PF02866">
    <property type="entry name" value="Ldh_1_C"/>
    <property type="match status" value="1"/>
</dbReference>
<dbReference type="Pfam" id="PF00056">
    <property type="entry name" value="Ldh_1_N"/>
    <property type="match status" value="1"/>
</dbReference>
<dbReference type="PIRSF" id="PIRSF000102">
    <property type="entry name" value="Lac_mal_DH"/>
    <property type="match status" value="1"/>
</dbReference>
<dbReference type="SUPFAM" id="SSF56327">
    <property type="entry name" value="LDH C-terminal domain-like"/>
    <property type="match status" value="1"/>
</dbReference>
<dbReference type="SUPFAM" id="SSF51735">
    <property type="entry name" value="NAD(P)-binding Rossmann-fold domains"/>
    <property type="match status" value="1"/>
</dbReference>
<dbReference type="PROSITE" id="PS00068">
    <property type="entry name" value="MDH"/>
    <property type="match status" value="1"/>
</dbReference>
<gene>
    <name evidence="1" type="primary">mdh</name>
    <name type="ordered locus">PC1_0553</name>
</gene>
<reference key="1">
    <citation type="submission" date="2009-07" db="EMBL/GenBank/DDBJ databases">
        <title>Complete sequence of Pectobacterium carotovorum subsp. carotovorum PC1.</title>
        <authorList>
            <consortium name="US DOE Joint Genome Institute"/>
            <person name="Lucas S."/>
            <person name="Copeland A."/>
            <person name="Lapidus A."/>
            <person name="Glavina del Rio T."/>
            <person name="Tice H."/>
            <person name="Bruce D."/>
            <person name="Goodwin L."/>
            <person name="Pitluck S."/>
            <person name="Munk A.C."/>
            <person name="Brettin T."/>
            <person name="Detter J.C."/>
            <person name="Han C."/>
            <person name="Tapia R."/>
            <person name="Larimer F."/>
            <person name="Land M."/>
            <person name="Hauser L."/>
            <person name="Kyrpides N."/>
            <person name="Mikhailova N."/>
            <person name="Balakrishnan V."/>
            <person name="Glasner J."/>
            <person name="Perna N.T."/>
        </authorList>
    </citation>
    <scope>NUCLEOTIDE SEQUENCE [LARGE SCALE GENOMIC DNA]</scope>
    <source>
        <strain>PC1</strain>
    </source>
</reference>
<evidence type="ECO:0000255" key="1">
    <source>
        <dbReference type="HAMAP-Rule" id="MF_01516"/>
    </source>
</evidence>
<name>MDH_PECCP</name>
<keyword id="KW-0520">NAD</keyword>
<keyword id="KW-0560">Oxidoreductase</keyword>
<keyword id="KW-0816">Tricarboxylic acid cycle</keyword>